<evidence type="ECO:0000255" key="1"/>
<evidence type="ECO:0000269" key="2">
    <source>
    </source>
</evidence>
<evidence type="ECO:0000303" key="3">
    <source>
    </source>
</evidence>
<evidence type="ECO:0000305" key="4"/>
<reference evidence="4" key="1">
    <citation type="journal article" date="2009" name="BMC Evol. Biol.">
        <title>A proteomic approach for studying insect phylogeny: CAPA peptides of ancient insect taxa (Dictyoptera, Blattoptera) as a test case.</title>
        <authorList>
            <person name="Roth S."/>
            <person name="Fromm B."/>
            <person name="Gaede G."/>
            <person name="Predel R."/>
        </authorList>
    </citation>
    <scope>PROTEIN SEQUENCE</scope>
    <scope>AMIDATION AT THR-11</scope>
    <source>
        <tissue evidence="2">Abdominal perisympathetic organs</tissue>
    </source>
</reference>
<sequence>GSSGLISFPRT</sequence>
<name>PVK1_ERGCA</name>
<proteinExistence type="evidence at protein level"/>
<accession>P85608</accession>
<feature type="peptide" id="PRO_0000378739" description="Periviscerokinin-1" evidence="2">
    <location>
        <begin position="1"/>
        <end position="11"/>
    </location>
</feature>
<feature type="modified residue" description="Threonine amide" evidence="2">
    <location>
        <position position="11"/>
    </location>
</feature>
<keyword id="KW-0027">Amidation</keyword>
<keyword id="KW-0903">Direct protein sequencing</keyword>
<keyword id="KW-0527">Neuropeptide</keyword>
<keyword id="KW-0964">Secreted</keyword>
<dbReference type="GO" id="GO:0005576">
    <property type="term" value="C:extracellular region"/>
    <property type="evidence" value="ECO:0007669"/>
    <property type="project" value="UniProtKB-SubCell"/>
</dbReference>
<dbReference type="GO" id="GO:0007218">
    <property type="term" value="P:neuropeptide signaling pathway"/>
    <property type="evidence" value="ECO:0007669"/>
    <property type="project" value="UniProtKB-KW"/>
</dbReference>
<dbReference type="InterPro" id="IPR013231">
    <property type="entry name" value="Periviscerokinin"/>
</dbReference>
<dbReference type="Pfam" id="PF08259">
    <property type="entry name" value="Periviscerokin"/>
    <property type="match status" value="1"/>
</dbReference>
<protein>
    <recommendedName>
        <fullName evidence="3">Periviscerokinin-1</fullName>
        <shortName evidence="3">ErgCa-PVK-1</shortName>
    </recommendedName>
</protein>
<organism>
    <name type="scientific">Ergaula capucina</name>
    <name type="common">Beetle roach</name>
    <dbReference type="NCBI Taxonomy" id="76901"/>
    <lineage>
        <taxon>Eukaryota</taxon>
        <taxon>Metazoa</taxon>
        <taxon>Ecdysozoa</taxon>
        <taxon>Arthropoda</taxon>
        <taxon>Hexapoda</taxon>
        <taxon>Insecta</taxon>
        <taxon>Pterygota</taxon>
        <taxon>Neoptera</taxon>
        <taxon>Polyneoptera</taxon>
        <taxon>Dictyoptera</taxon>
        <taxon>Blattodea</taxon>
        <taxon>Corydioidea</taxon>
        <taxon>Corydiidae</taxon>
        <taxon>Ergaula</taxon>
    </lineage>
</organism>
<comment type="function">
    <text evidence="4">Mediates visceral muscle contractile activity (myotropic activity).</text>
</comment>
<comment type="subcellular location">
    <subcellularLocation>
        <location evidence="4">Secreted</location>
    </subcellularLocation>
</comment>
<comment type="similarity">
    <text evidence="1">Belongs to the periviscerokinin family.</text>
</comment>